<evidence type="ECO:0000255" key="1">
    <source>
        <dbReference type="HAMAP-Rule" id="MF_00249"/>
    </source>
</evidence>
<comment type="function">
    <text evidence="1">ATPase subunit of a proteasome-like degradation complex; this subunit has chaperone activity. The binding of ATP and its subsequent hydrolysis by HslU are essential for unfolding of protein substrates subsequently hydrolyzed by HslV. HslU recognizes the N-terminal part of its protein substrates and unfolds these before they are guided to HslV for hydrolysis.</text>
</comment>
<comment type="subunit">
    <text evidence="1">A double ring-shaped homohexamer of HslV is capped on each side by a ring-shaped HslU homohexamer. The assembly of the HslU/HslV complex is dependent on binding of ATP.</text>
</comment>
<comment type="subcellular location">
    <subcellularLocation>
        <location evidence="1">Cytoplasm</location>
    </subcellularLocation>
</comment>
<comment type="induction">
    <text evidence="1">By heat shock.</text>
</comment>
<comment type="similarity">
    <text evidence="1">Belongs to the ClpX chaperone family. HslU subfamily.</text>
</comment>
<proteinExistence type="inferred from homology"/>
<reference key="1">
    <citation type="submission" date="2008-05" db="EMBL/GenBank/DDBJ databases">
        <title>Complete sequence of Shigella boydii serotype 18 strain BS512.</title>
        <authorList>
            <person name="Rasko D.A."/>
            <person name="Rosovitz M."/>
            <person name="Maurelli A.T."/>
            <person name="Myers G."/>
            <person name="Seshadri R."/>
            <person name="Cer R."/>
            <person name="Jiang L."/>
            <person name="Ravel J."/>
            <person name="Sebastian Y."/>
        </authorList>
    </citation>
    <scope>NUCLEOTIDE SEQUENCE [LARGE SCALE GENOMIC DNA]</scope>
    <source>
        <strain>CDC 3083-94 / BS512</strain>
    </source>
</reference>
<accession>B2TWC7</accession>
<feature type="chain" id="PRO_1000100977" description="ATP-dependent protease ATPase subunit HslU">
    <location>
        <begin position="1"/>
        <end position="443"/>
    </location>
</feature>
<feature type="binding site" evidence="1">
    <location>
        <position position="18"/>
    </location>
    <ligand>
        <name>ATP</name>
        <dbReference type="ChEBI" id="CHEBI:30616"/>
    </ligand>
</feature>
<feature type="binding site" evidence="1">
    <location>
        <begin position="60"/>
        <end position="65"/>
    </location>
    <ligand>
        <name>ATP</name>
        <dbReference type="ChEBI" id="CHEBI:30616"/>
    </ligand>
</feature>
<feature type="binding site" evidence="1">
    <location>
        <position position="256"/>
    </location>
    <ligand>
        <name>ATP</name>
        <dbReference type="ChEBI" id="CHEBI:30616"/>
    </ligand>
</feature>
<feature type="binding site" evidence="1">
    <location>
        <position position="321"/>
    </location>
    <ligand>
        <name>ATP</name>
        <dbReference type="ChEBI" id="CHEBI:30616"/>
    </ligand>
</feature>
<feature type="binding site" evidence="1">
    <location>
        <position position="393"/>
    </location>
    <ligand>
        <name>ATP</name>
        <dbReference type="ChEBI" id="CHEBI:30616"/>
    </ligand>
</feature>
<sequence>MSEMTPREIVSELDKHIIGQDNAKRSVAIALRNRWRRMQLNEELRHEVTPKNILMIGPTGVGKTEIARRLAKLANAPFIKVEATKFTEVGYVGKEVDSIIRDLTDAAVKMVRVQAIEKNRYRAEELAEERILDVLIPPAKNNWGQTEQQQEPSAARQAFRKKLREGQLDDKEIEIDLAAAPMGVEIMAPPGMEEMTSQLQSMFQNLGGQKQKARKLKIKDAMKLLIEEEAAKLVNPEELKQDAIDAVEQHGIVFIDEIDKICKRGESSGPDVSREGVQRDLLPLVEGCTVSTKHGMVKTDHILFIASGAFQIAKPSDLIPELQGRLPIRVELQALTTSDFERILTEPNASITVQYKALMATEGVNIEFTDSGIKRIAEAAWQVNESTENIGARRLHTVLERLMEEISYDASDLSGQNITIDADYVSKRLDALVADEDLSRFIL</sequence>
<keyword id="KW-0067">ATP-binding</keyword>
<keyword id="KW-0143">Chaperone</keyword>
<keyword id="KW-0963">Cytoplasm</keyword>
<keyword id="KW-0547">Nucleotide-binding</keyword>
<keyword id="KW-1185">Reference proteome</keyword>
<keyword id="KW-0346">Stress response</keyword>
<dbReference type="EMBL" id="CP001063">
    <property type="protein sequence ID" value="ACD07164.1"/>
    <property type="molecule type" value="Genomic_DNA"/>
</dbReference>
<dbReference type="RefSeq" id="WP_001293342.1">
    <property type="nucleotide sequence ID" value="NC_010658.1"/>
</dbReference>
<dbReference type="SMR" id="B2TWC7"/>
<dbReference type="STRING" id="344609.SbBS512_E4413"/>
<dbReference type="KEGG" id="sbc:SbBS512_E4413"/>
<dbReference type="HOGENOM" id="CLU_033123_0_0_6"/>
<dbReference type="Proteomes" id="UP000001030">
    <property type="component" value="Chromosome"/>
</dbReference>
<dbReference type="GO" id="GO:0009376">
    <property type="term" value="C:HslUV protease complex"/>
    <property type="evidence" value="ECO:0007669"/>
    <property type="project" value="UniProtKB-UniRule"/>
</dbReference>
<dbReference type="GO" id="GO:0005524">
    <property type="term" value="F:ATP binding"/>
    <property type="evidence" value="ECO:0007669"/>
    <property type="project" value="UniProtKB-UniRule"/>
</dbReference>
<dbReference type="GO" id="GO:0016887">
    <property type="term" value="F:ATP hydrolysis activity"/>
    <property type="evidence" value="ECO:0007669"/>
    <property type="project" value="InterPro"/>
</dbReference>
<dbReference type="GO" id="GO:0008233">
    <property type="term" value="F:peptidase activity"/>
    <property type="evidence" value="ECO:0007669"/>
    <property type="project" value="InterPro"/>
</dbReference>
<dbReference type="GO" id="GO:0036402">
    <property type="term" value="F:proteasome-activating activity"/>
    <property type="evidence" value="ECO:0007669"/>
    <property type="project" value="UniProtKB-UniRule"/>
</dbReference>
<dbReference type="GO" id="GO:0043335">
    <property type="term" value="P:protein unfolding"/>
    <property type="evidence" value="ECO:0007669"/>
    <property type="project" value="UniProtKB-UniRule"/>
</dbReference>
<dbReference type="GO" id="GO:0051603">
    <property type="term" value="P:proteolysis involved in protein catabolic process"/>
    <property type="evidence" value="ECO:0007669"/>
    <property type="project" value="TreeGrafter"/>
</dbReference>
<dbReference type="CDD" id="cd19498">
    <property type="entry name" value="RecA-like_HslU"/>
    <property type="match status" value="1"/>
</dbReference>
<dbReference type="FunFam" id="1.10.8.10:FF:000012">
    <property type="entry name" value="ATP-dependent protease ATPase subunit HslU"/>
    <property type="match status" value="1"/>
</dbReference>
<dbReference type="FunFam" id="1.10.8.10:FF:000028">
    <property type="entry name" value="ATP-dependent protease ATPase subunit HslU"/>
    <property type="match status" value="1"/>
</dbReference>
<dbReference type="FunFam" id="1.10.8.60:FF:000027">
    <property type="entry name" value="ATP-dependent protease ATPase subunit HslU"/>
    <property type="match status" value="1"/>
</dbReference>
<dbReference type="FunFam" id="3.40.50.300:FF:000213">
    <property type="entry name" value="ATP-dependent protease ATPase subunit HslU"/>
    <property type="match status" value="1"/>
</dbReference>
<dbReference type="FunFam" id="3.40.50.300:FF:000220">
    <property type="entry name" value="ATP-dependent protease ATPase subunit HslU"/>
    <property type="match status" value="1"/>
</dbReference>
<dbReference type="Gene3D" id="1.10.8.60">
    <property type="match status" value="1"/>
</dbReference>
<dbReference type="Gene3D" id="1.10.8.10">
    <property type="entry name" value="DNA helicase RuvA subunit, C-terminal domain"/>
    <property type="match status" value="2"/>
</dbReference>
<dbReference type="Gene3D" id="3.40.50.300">
    <property type="entry name" value="P-loop containing nucleotide triphosphate hydrolases"/>
    <property type="match status" value="1"/>
</dbReference>
<dbReference type="HAMAP" id="MF_00249">
    <property type="entry name" value="HslU"/>
    <property type="match status" value="1"/>
</dbReference>
<dbReference type="InterPro" id="IPR003593">
    <property type="entry name" value="AAA+_ATPase"/>
</dbReference>
<dbReference type="InterPro" id="IPR050052">
    <property type="entry name" value="ATP-dep_Clp_protease_ClpX"/>
</dbReference>
<dbReference type="InterPro" id="IPR003959">
    <property type="entry name" value="ATPase_AAA_core"/>
</dbReference>
<dbReference type="InterPro" id="IPR019489">
    <property type="entry name" value="Clp_ATPase_C"/>
</dbReference>
<dbReference type="InterPro" id="IPR004491">
    <property type="entry name" value="HslU"/>
</dbReference>
<dbReference type="InterPro" id="IPR027417">
    <property type="entry name" value="P-loop_NTPase"/>
</dbReference>
<dbReference type="NCBIfam" id="TIGR00390">
    <property type="entry name" value="hslU"/>
    <property type="match status" value="1"/>
</dbReference>
<dbReference type="NCBIfam" id="NF003544">
    <property type="entry name" value="PRK05201.1"/>
    <property type="match status" value="1"/>
</dbReference>
<dbReference type="PANTHER" id="PTHR48102">
    <property type="entry name" value="ATP-DEPENDENT CLP PROTEASE ATP-BINDING SUBUNIT CLPX-LIKE, MITOCHONDRIAL-RELATED"/>
    <property type="match status" value="1"/>
</dbReference>
<dbReference type="PANTHER" id="PTHR48102:SF3">
    <property type="entry name" value="ATP-DEPENDENT PROTEASE ATPASE SUBUNIT HSLU"/>
    <property type="match status" value="1"/>
</dbReference>
<dbReference type="Pfam" id="PF00004">
    <property type="entry name" value="AAA"/>
    <property type="match status" value="1"/>
</dbReference>
<dbReference type="Pfam" id="PF07724">
    <property type="entry name" value="AAA_2"/>
    <property type="match status" value="1"/>
</dbReference>
<dbReference type="SMART" id="SM00382">
    <property type="entry name" value="AAA"/>
    <property type="match status" value="1"/>
</dbReference>
<dbReference type="SMART" id="SM01086">
    <property type="entry name" value="ClpB_D2-small"/>
    <property type="match status" value="1"/>
</dbReference>
<dbReference type="SUPFAM" id="SSF52540">
    <property type="entry name" value="P-loop containing nucleoside triphosphate hydrolases"/>
    <property type="match status" value="1"/>
</dbReference>
<protein>
    <recommendedName>
        <fullName evidence="1">ATP-dependent protease ATPase subunit HslU</fullName>
    </recommendedName>
    <alternativeName>
        <fullName evidence="1">Heat shock protein HslU</fullName>
    </alternativeName>
    <alternativeName>
        <fullName evidence="1">Unfoldase HslU</fullName>
    </alternativeName>
</protein>
<organism>
    <name type="scientific">Shigella boydii serotype 18 (strain CDC 3083-94 / BS512)</name>
    <dbReference type="NCBI Taxonomy" id="344609"/>
    <lineage>
        <taxon>Bacteria</taxon>
        <taxon>Pseudomonadati</taxon>
        <taxon>Pseudomonadota</taxon>
        <taxon>Gammaproteobacteria</taxon>
        <taxon>Enterobacterales</taxon>
        <taxon>Enterobacteriaceae</taxon>
        <taxon>Shigella</taxon>
    </lineage>
</organism>
<name>HSLU_SHIB3</name>
<gene>
    <name evidence="1" type="primary">hslU</name>
    <name type="ordered locus">SbBS512_E4413</name>
</gene>